<sequence>MQHLVLIGFMGSGKSSLAQELGLALKLEVLDTDMIISERVGLSVRGIFEELGEDNFRMFEKNLIDELKTLKTPHIISTGGGIVMHENLKGLGTTFYLKMDFETLIKRLNQKEREKRPLLNNLTQAKELFEKRQALYEKNASFIIDARGGLNNSLKQVLQFIA</sequence>
<gene>
    <name evidence="1" type="primary">aroK</name>
    <name type="ordered locus">jhp_0145</name>
</gene>
<keyword id="KW-0028">Amino-acid biosynthesis</keyword>
<keyword id="KW-0057">Aromatic amino acid biosynthesis</keyword>
<keyword id="KW-0067">ATP-binding</keyword>
<keyword id="KW-0963">Cytoplasm</keyword>
<keyword id="KW-0418">Kinase</keyword>
<keyword id="KW-0460">Magnesium</keyword>
<keyword id="KW-0479">Metal-binding</keyword>
<keyword id="KW-0547">Nucleotide-binding</keyword>
<keyword id="KW-0808">Transferase</keyword>
<evidence type="ECO:0000255" key="1">
    <source>
        <dbReference type="HAMAP-Rule" id="MF_00109"/>
    </source>
</evidence>
<accession>Q9ZMS3</accession>
<comment type="function">
    <text evidence="1">Catalyzes the specific phosphorylation of the 3-hydroxyl group of shikimic acid using ATP as a cosubstrate.</text>
</comment>
<comment type="catalytic activity">
    <reaction evidence="1">
        <text>shikimate + ATP = 3-phosphoshikimate + ADP + H(+)</text>
        <dbReference type="Rhea" id="RHEA:13121"/>
        <dbReference type="ChEBI" id="CHEBI:15378"/>
        <dbReference type="ChEBI" id="CHEBI:30616"/>
        <dbReference type="ChEBI" id="CHEBI:36208"/>
        <dbReference type="ChEBI" id="CHEBI:145989"/>
        <dbReference type="ChEBI" id="CHEBI:456216"/>
        <dbReference type="EC" id="2.7.1.71"/>
    </reaction>
</comment>
<comment type="cofactor">
    <cofactor evidence="1">
        <name>Mg(2+)</name>
        <dbReference type="ChEBI" id="CHEBI:18420"/>
    </cofactor>
    <text evidence="1">Binds 1 Mg(2+) ion per subunit.</text>
</comment>
<comment type="pathway">
    <text evidence="1">Metabolic intermediate biosynthesis; chorismate biosynthesis; chorismate from D-erythrose 4-phosphate and phosphoenolpyruvate: step 5/7.</text>
</comment>
<comment type="subunit">
    <text evidence="1">Monomer.</text>
</comment>
<comment type="subcellular location">
    <subcellularLocation>
        <location evidence="1">Cytoplasm</location>
    </subcellularLocation>
</comment>
<comment type="similarity">
    <text evidence="1">Belongs to the shikimate kinase family.</text>
</comment>
<reference key="1">
    <citation type="journal article" date="1999" name="Nature">
        <title>Genomic sequence comparison of two unrelated isolates of the human gastric pathogen Helicobacter pylori.</title>
        <authorList>
            <person name="Alm R.A."/>
            <person name="Ling L.-S.L."/>
            <person name="Moir D.T."/>
            <person name="King B.L."/>
            <person name="Brown E.D."/>
            <person name="Doig P.C."/>
            <person name="Smith D.R."/>
            <person name="Noonan B."/>
            <person name="Guild B.C."/>
            <person name="deJonge B.L."/>
            <person name="Carmel G."/>
            <person name="Tummino P.J."/>
            <person name="Caruso A."/>
            <person name="Uria-Nickelsen M."/>
            <person name="Mills D.M."/>
            <person name="Ives C."/>
            <person name="Gibson R."/>
            <person name="Merberg D."/>
            <person name="Mills S.D."/>
            <person name="Jiang Q."/>
            <person name="Taylor D.E."/>
            <person name="Vovis G.F."/>
            <person name="Trust T.J."/>
        </authorList>
    </citation>
    <scope>NUCLEOTIDE SEQUENCE [LARGE SCALE GENOMIC DNA]</scope>
    <source>
        <strain>J99 / ATCC 700824</strain>
    </source>
</reference>
<protein>
    <recommendedName>
        <fullName evidence="1">Shikimate kinase</fullName>
        <shortName evidence="1">SK</shortName>
        <ecNumber evidence="1">2.7.1.71</ecNumber>
    </recommendedName>
</protein>
<name>AROK_HELPJ</name>
<proteinExistence type="inferred from homology"/>
<feature type="chain" id="PRO_0000192388" description="Shikimate kinase">
    <location>
        <begin position="1"/>
        <end position="162"/>
    </location>
</feature>
<feature type="binding site" evidence="1">
    <location>
        <begin position="11"/>
        <end position="16"/>
    </location>
    <ligand>
        <name>ATP</name>
        <dbReference type="ChEBI" id="CHEBI:30616"/>
    </ligand>
</feature>
<feature type="binding site" evidence="1">
    <location>
        <position position="15"/>
    </location>
    <ligand>
        <name>Mg(2+)</name>
        <dbReference type="ChEBI" id="CHEBI:18420"/>
    </ligand>
</feature>
<feature type="binding site" evidence="1">
    <location>
        <position position="33"/>
    </location>
    <ligand>
        <name>substrate</name>
    </ligand>
</feature>
<feature type="binding site" evidence="1">
    <location>
        <position position="57"/>
    </location>
    <ligand>
        <name>substrate</name>
    </ligand>
</feature>
<feature type="binding site" evidence="1">
    <location>
        <position position="80"/>
    </location>
    <ligand>
        <name>substrate</name>
    </ligand>
</feature>
<feature type="binding site" evidence="1">
    <location>
        <position position="116"/>
    </location>
    <ligand>
        <name>ATP</name>
        <dbReference type="ChEBI" id="CHEBI:30616"/>
    </ligand>
</feature>
<feature type="binding site" evidence="1">
    <location>
        <position position="132"/>
    </location>
    <ligand>
        <name>substrate</name>
    </ligand>
</feature>
<dbReference type="EC" id="2.7.1.71" evidence="1"/>
<dbReference type="EMBL" id="AE001439">
    <property type="protein sequence ID" value="AAD05726.1"/>
    <property type="molecule type" value="Genomic_DNA"/>
</dbReference>
<dbReference type="PIR" id="C71968">
    <property type="entry name" value="C71968"/>
</dbReference>
<dbReference type="RefSeq" id="WP_001164300.1">
    <property type="nucleotide sequence ID" value="NZ_CP011330.1"/>
</dbReference>
<dbReference type="SMR" id="Q9ZMS3"/>
<dbReference type="KEGG" id="hpj:jhp_0145"/>
<dbReference type="PATRIC" id="fig|85963.30.peg.879"/>
<dbReference type="eggNOG" id="COG0703">
    <property type="taxonomic scope" value="Bacteria"/>
</dbReference>
<dbReference type="UniPathway" id="UPA00053">
    <property type="reaction ID" value="UER00088"/>
</dbReference>
<dbReference type="Proteomes" id="UP000000804">
    <property type="component" value="Chromosome"/>
</dbReference>
<dbReference type="GO" id="GO:0005829">
    <property type="term" value="C:cytosol"/>
    <property type="evidence" value="ECO:0007669"/>
    <property type="project" value="TreeGrafter"/>
</dbReference>
<dbReference type="GO" id="GO:0005524">
    <property type="term" value="F:ATP binding"/>
    <property type="evidence" value="ECO:0007669"/>
    <property type="project" value="UniProtKB-UniRule"/>
</dbReference>
<dbReference type="GO" id="GO:0000287">
    <property type="term" value="F:magnesium ion binding"/>
    <property type="evidence" value="ECO:0007669"/>
    <property type="project" value="UniProtKB-UniRule"/>
</dbReference>
<dbReference type="GO" id="GO:0004765">
    <property type="term" value="F:shikimate kinase activity"/>
    <property type="evidence" value="ECO:0007669"/>
    <property type="project" value="UniProtKB-UniRule"/>
</dbReference>
<dbReference type="GO" id="GO:0008652">
    <property type="term" value="P:amino acid biosynthetic process"/>
    <property type="evidence" value="ECO:0007669"/>
    <property type="project" value="UniProtKB-KW"/>
</dbReference>
<dbReference type="GO" id="GO:0009073">
    <property type="term" value="P:aromatic amino acid family biosynthetic process"/>
    <property type="evidence" value="ECO:0007669"/>
    <property type="project" value="UniProtKB-KW"/>
</dbReference>
<dbReference type="GO" id="GO:0009423">
    <property type="term" value="P:chorismate biosynthetic process"/>
    <property type="evidence" value="ECO:0007669"/>
    <property type="project" value="UniProtKB-UniRule"/>
</dbReference>
<dbReference type="CDD" id="cd00464">
    <property type="entry name" value="SK"/>
    <property type="match status" value="1"/>
</dbReference>
<dbReference type="FunFam" id="3.40.50.300:FF:001487">
    <property type="entry name" value="Shikimate kinase"/>
    <property type="match status" value="1"/>
</dbReference>
<dbReference type="Gene3D" id="3.40.50.300">
    <property type="entry name" value="P-loop containing nucleotide triphosphate hydrolases"/>
    <property type="match status" value="1"/>
</dbReference>
<dbReference type="HAMAP" id="MF_00109">
    <property type="entry name" value="Shikimate_kinase"/>
    <property type="match status" value="1"/>
</dbReference>
<dbReference type="InterPro" id="IPR027417">
    <property type="entry name" value="P-loop_NTPase"/>
</dbReference>
<dbReference type="InterPro" id="IPR031322">
    <property type="entry name" value="Shikimate/glucono_kinase"/>
</dbReference>
<dbReference type="InterPro" id="IPR000623">
    <property type="entry name" value="Shikimate_kinase/TSH1"/>
</dbReference>
<dbReference type="InterPro" id="IPR023000">
    <property type="entry name" value="Shikimate_kinase_CS"/>
</dbReference>
<dbReference type="PANTHER" id="PTHR21087">
    <property type="entry name" value="SHIKIMATE KINASE"/>
    <property type="match status" value="1"/>
</dbReference>
<dbReference type="PANTHER" id="PTHR21087:SF16">
    <property type="entry name" value="SHIKIMATE KINASE 1, CHLOROPLASTIC"/>
    <property type="match status" value="1"/>
</dbReference>
<dbReference type="Pfam" id="PF01202">
    <property type="entry name" value="SKI"/>
    <property type="match status" value="1"/>
</dbReference>
<dbReference type="PRINTS" id="PR01100">
    <property type="entry name" value="SHIKIMTKNASE"/>
</dbReference>
<dbReference type="SUPFAM" id="SSF52540">
    <property type="entry name" value="P-loop containing nucleoside triphosphate hydrolases"/>
    <property type="match status" value="1"/>
</dbReference>
<dbReference type="PROSITE" id="PS01128">
    <property type="entry name" value="SHIKIMATE_KINASE"/>
    <property type="match status" value="1"/>
</dbReference>
<organism>
    <name type="scientific">Helicobacter pylori (strain J99 / ATCC 700824)</name>
    <name type="common">Campylobacter pylori J99</name>
    <dbReference type="NCBI Taxonomy" id="85963"/>
    <lineage>
        <taxon>Bacteria</taxon>
        <taxon>Pseudomonadati</taxon>
        <taxon>Campylobacterota</taxon>
        <taxon>Epsilonproteobacteria</taxon>
        <taxon>Campylobacterales</taxon>
        <taxon>Helicobacteraceae</taxon>
        <taxon>Helicobacter</taxon>
    </lineage>
</organism>